<feature type="chain" id="PRO_1000045196" description="5-oxoprolinase subunit A">
    <location>
        <begin position="1"/>
        <end position="255"/>
    </location>
</feature>
<sequence length="255" mass="28142">MFKVDLNSDLGESFGAYKMGMDEEILKFVSSVNVACGFHAGDPCVMDKTLNLAKQNGVCIGAHPSYPDLLGFGRRNMQISFEEAKNYALYQLGALFGFAKAKDMKIQHFKAHGALYNMAAIDENLALALCEAVASFDENIIFLGLSNSAMNEAAKKKGLKYANEVFADRAYNDDGTLVSRKLEGALIHDENLAIKRVIKMIKESKVTSINGKEIDLKADSICVHGDNVKALEFVKKIKENLEKEQIQICALENFI</sequence>
<dbReference type="EC" id="3.5.2.9" evidence="1"/>
<dbReference type="EMBL" id="CP000768">
    <property type="protein sequence ID" value="ABS44722.1"/>
    <property type="molecule type" value="Genomic_DNA"/>
</dbReference>
<dbReference type="SMR" id="A7H5Q5"/>
<dbReference type="KEGG" id="cjd:JJD26997_1899"/>
<dbReference type="HOGENOM" id="CLU_069535_0_0_7"/>
<dbReference type="Proteomes" id="UP000002302">
    <property type="component" value="Chromosome"/>
</dbReference>
<dbReference type="GO" id="GO:0017168">
    <property type="term" value="F:5-oxoprolinase (ATP-hydrolyzing) activity"/>
    <property type="evidence" value="ECO:0007669"/>
    <property type="project" value="UniProtKB-UniRule"/>
</dbReference>
<dbReference type="GO" id="GO:0005524">
    <property type="term" value="F:ATP binding"/>
    <property type="evidence" value="ECO:0007669"/>
    <property type="project" value="UniProtKB-UniRule"/>
</dbReference>
<dbReference type="GO" id="GO:0005975">
    <property type="term" value="P:carbohydrate metabolic process"/>
    <property type="evidence" value="ECO:0007669"/>
    <property type="project" value="InterPro"/>
</dbReference>
<dbReference type="CDD" id="cd10787">
    <property type="entry name" value="LamB_YcsF_like"/>
    <property type="match status" value="1"/>
</dbReference>
<dbReference type="Gene3D" id="3.20.20.370">
    <property type="entry name" value="Glycoside hydrolase/deacetylase"/>
    <property type="match status" value="1"/>
</dbReference>
<dbReference type="HAMAP" id="MF_00691">
    <property type="entry name" value="PxpA"/>
    <property type="match status" value="1"/>
</dbReference>
<dbReference type="InterPro" id="IPR011330">
    <property type="entry name" value="Glyco_hydro/deAcase_b/a-brl"/>
</dbReference>
<dbReference type="InterPro" id="IPR005501">
    <property type="entry name" value="LamB/YcsF/PxpA-like"/>
</dbReference>
<dbReference type="NCBIfam" id="NF003814">
    <property type="entry name" value="PRK05406.1-3"/>
    <property type="match status" value="1"/>
</dbReference>
<dbReference type="NCBIfam" id="NF003816">
    <property type="entry name" value="PRK05406.1-5"/>
    <property type="match status" value="1"/>
</dbReference>
<dbReference type="PANTHER" id="PTHR30292:SF0">
    <property type="entry name" value="5-OXOPROLINASE SUBUNIT A"/>
    <property type="match status" value="1"/>
</dbReference>
<dbReference type="PANTHER" id="PTHR30292">
    <property type="entry name" value="UNCHARACTERIZED PROTEIN YBGL-RELATED"/>
    <property type="match status" value="1"/>
</dbReference>
<dbReference type="Pfam" id="PF03746">
    <property type="entry name" value="LamB_YcsF"/>
    <property type="match status" value="1"/>
</dbReference>
<dbReference type="SUPFAM" id="SSF88713">
    <property type="entry name" value="Glycoside hydrolase/deacetylase"/>
    <property type="match status" value="1"/>
</dbReference>
<proteinExistence type="inferred from homology"/>
<name>PXPA_CAMJD</name>
<accession>A7H5Q5</accession>
<evidence type="ECO:0000255" key="1">
    <source>
        <dbReference type="HAMAP-Rule" id="MF_00691"/>
    </source>
</evidence>
<keyword id="KW-0067">ATP-binding</keyword>
<keyword id="KW-0378">Hydrolase</keyword>
<keyword id="KW-0547">Nucleotide-binding</keyword>
<reference key="1">
    <citation type="submission" date="2007-07" db="EMBL/GenBank/DDBJ databases">
        <title>Complete genome sequence of Campylobacter jejuni subsp doylei 269.97 isolated from human blood.</title>
        <authorList>
            <person name="Fouts D.E."/>
            <person name="Mongodin E.F."/>
            <person name="Puiu D."/>
            <person name="Sebastian Y."/>
            <person name="Miller W.G."/>
            <person name="Mandrell R.E."/>
            <person name="Lastovica A.J."/>
            <person name="Nelson K.E."/>
        </authorList>
    </citation>
    <scope>NUCLEOTIDE SEQUENCE [LARGE SCALE GENOMIC DNA]</scope>
    <source>
        <strain>ATCC BAA-1458 / RM4099 / 269.97</strain>
    </source>
</reference>
<protein>
    <recommendedName>
        <fullName evidence="1">5-oxoprolinase subunit A</fullName>
        <shortName evidence="1">5-OPase subunit A</shortName>
        <ecNumber evidence="1">3.5.2.9</ecNumber>
    </recommendedName>
    <alternativeName>
        <fullName evidence="1">5-oxoprolinase (ATP-hydrolyzing) subunit A</fullName>
    </alternativeName>
</protein>
<gene>
    <name evidence="1" type="primary">pxpA</name>
    <name type="ordered locus">JJD26997_1899</name>
</gene>
<organism>
    <name type="scientific">Campylobacter jejuni subsp. doylei (strain ATCC BAA-1458 / RM4099 / 269.97)</name>
    <dbReference type="NCBI Taxonomy" id="360109"/>
    <lineage>
        <taxon>Bacteria</taxon>
        <taxon>Pseudomonadati</taxon>
        <taxon>Campylobacterota</taxon>
        <taxon>Epsilonproteobacteria</taxon>
        <taxon>Campylobacterales</taxon>
        <taxon>Campylobacteraceae</taxon>
        <taxon>Campylobacter</taxon>
    </lineage>
</organism>
<comment type="function">
    <text evidence="1">Catalyzes the cleavage of 5-oxoproline to form L-glutamate coupled to the hydrolysis of ATP to ADP and inorganic phosphate.</text>
</comment>
<comment type="catalytic activity">
    <reaction evidence="1">
        <text>5-oxo-L-proline + ATP + 2 H2O = L-glutamate + ADP + phosphate + H(+)</text>
        <dbReference type="Rhea" id="RHEA:10348"/>
        <dbReference type="ChEBI" id="CHEBI:15377"/>
        <dbReference type="ChEBI" id="CHEBI:15378"/>
        <dbReference type="ChEBI" id="CHEBI:29985"/>
        <dbReference type="ChEBI" id="CHEBI:30616"/>
        <dbReference type="ChEBI" id="CHEBI:43474"/>
        <dbReference type="ChEBI" id="CHEBI:58402"/>
        <dbReference type="ChEBI" id="CHEBI:456216"/>
        <dbReference type="EC" id="3.5.2.9"/>
    </reaction>
</comment>
<comment type="subunit">
    <text evidence="1">Forms a complex composed of PxpA, PxpB and PxpC.</text>
</comment>
<comment type="similarity">
    <text evidence="1">Belongs to the LamB/PxpA family.</text>
</comment>